<reference key="1">
    <citation type="journal article" date="2010" name="BMC Genomics">
        <title>A genomic perspective on the potential of Actinobacillus succinogenes for industrial succinate production.</title>
        <authorList>
            <person name="McKinlay J.B."/>
            <person name="Laivenieks M."/>
            <person name="Schindler B.D."/>
            <person name="McKinlay A.A."/>
            <person name="Siddaramappa S."/>
            <person name="Challacombe J.F."/>
            <person name="Lowry S.R."/>
            <person name="Clum A."/>
            <person name="Lapidus A.L."/>
            <person name="Burkhart K.B."/>
            <person name="Harkins V."/>
            <person name="Vieille C."/>
        </authorList>
    </citation>
    <scope>NUCLEOTIDE SEQUENCE [LARGE SCALE GENOMIC DNA]</scope>
    <source>
        <strain>ATCC 55618 / DSM 22257 / CCUG 43843 / 130Z</strain>
    </source>
</reference>
<comment type="function">
    <text evidence="1">Catalyzes the reduction of hydroxylamine to form NH(3) and H(2)O.</text>
</comment>
<comment type="catalytic activity">
    <reaction evidence="1">
        <text>A + NH4(+) + H2O = hydroxylamine + AH2 + H(+)</text>
        <dbReference type="Rhea" id="RHEA:22052"/>
        <dbReference type="ChEBI" id="CHEBI:13193"/>
        <dbReference type="ChEBI" id="CHEBI:15377"/>
        <dbReference type="ChEBI" id="CHEBI:15378"/>
        <dbReference type="ChEBI" id="CHEBI:15429"/>
        <dbReference type="ChEBI" id="CHEBI:17499"/>
        <dbReference type="ChEBI" id="CHEBI:28938"/>
        <dbReference type="EC" id="1.7.99.1"/>
    </reaction>
</comment>
<comment type="cofactor">
    <cofactor evidence="1">
        <name>[2Fe-2S] cluster</name>
        <dbReference type="ChEBI" id="CHEBI:190135"/>
    </cofactor>
    <text evidence="1">Binds 1 [2Fe-2S] cluster.</text>
</comment>
<comment type="cofactor">
    <cofactor evidence="1">
        <name>hybrid [4Fe-2O-2S] cluster</name>
        <dbReference type="ChEBI" id="CHEBI:60519"/>
    </cofactor>
    <text evidence="1">Binds 1 hybrid [4Fe-2O-2S] cluster.</text>
</comment>
<comment type="subcellular location">
    <subcellularLocation>
        <location evidence="1">Cytoplasm</location>
    </subcellularLocation>
</comment>
<comment type="similarity">
    <text evidence="1">Belongs to the HCP family.</text>
</comment>
<gene>
    <name evidence="1" type="primary">hcp</name>
    <name type="ordered locus">Asuc_0352</name>
</gene>
<protein>
    <recommendedName>
        <fullName evidence="1">Hydroxylamine reductase</fullName>
        <ecNumber evidence="1">1.7.99.1</ecNumber>
    </recommendedName>
    <alternativeName>
        <fullName evidence="1">Hybrid-cluster protein</fullName>
        <shortName evidence="1">HCP</shortName>
    </alternativeName>
    <alternativeName>
        <fullName evidence="1">Prismane protein</fullName>
    </alternativeName>
</protein>
<name>HCP_ACTSZ</name>
<evidence type="ECO:0000255" key="1">
    <source>
        <dbReference type="HAMAP-Rule" id="MF_00069"/>
    </source>
</evidence>
<dbReference type="EC" id="1.7.99.1" evidence="1"/>
<dbReference type="EMBL" id="CP000746">
    <property type="protein sequence ID" value="ABR73730.1"/>
    <property type="molecule type" value="Genomic_DNA"/>
</dbReference>
<dbReference type="RefSeq" id="WP_011979005.1">
    <property type="nucleotide sequence ID" value="NC_009655.1"/>
</dbReference>
<dbReference type="SMR" id="A6VL83"/>
<dbReference type="STRING" id="339671.Asuc_0352"/>
<dbReference type="KEGG" id="asu:Asuc_0352"/>
<dbReference type="eggNOG" id="COG1151">
    <property type="taxonomic scope" value="Bacteria"/>
</dbReference>
<dbReference type="HOGENOM" id="CLU_038344_2_0_6"/>
<dbReference type="OrthoDB" id="9761526at2"/>
<dbReference type="Proteomes" id="UP000001114">
    <property type="component" value="Chromosome"/>
</dbReference>
<dbReference type="GO" id="GO:0005737">
    <property type="term" value="C:cytoplasm"/>
    <property type="evidence" value="ECO:0007669"/>
    <property type="project" value="UniProtKB-SubCell"/>
</dbReference>
<dbReference type="GO" id="GO:0051537">
    <property type="term" value="F:2 iron, 2 sulfur cluster binding"/>
    <property type="evidence" value="ECO:0007669"/>
    <property type="project" value="UniProtKB-KW"/>
</dbReference>
<dbReference type="GO" id="GO:0050418">
    <property type="term" value="F:hydroxylamine reductase activity"/>
    <property type="evidence" value="ECO:0007669"/>
    <property type="project" value="UniProtKB-UniRule"/>
</dbReference>
<dbReference type="GO" id="GO:0046872">
    <property type="term" value="F:metal ion binding"/>
    <property type="evidence" value="ECO:0007669"/>
    <property type="project" value="UniProtKB-KW"/>
</dbReference>
<dbReference type="GO" id="GO:0004601">
    <property type="term" value="F:peroxidase activity"/>
    <property type="evidence" value="ECO:0007669"/>
    <property type="project" value="TreeGrafter"/>
</dbReference>
<dbReference type="GO" id="GO:0042542">
    <property type="term" value="P:response to hydrogen peroxide"/>
    <property type="evidence" value="ECO:0007669"/>
    <property type="project" value="TreeGrafter"/>
</dbReference>
<dbReference type="FunFam" id="1.20.1270.20:FF:000001">
    <property type="entry name" value="Hydroxylamine reductase"/>
    <property type="match status" value="1"/>
</dbReference>
<dbReference type="FunFam" id="1.20.1270.20:FF:000002">
    <property type="entry name" value="Hydroxylamine reductase"/>
    <property type="match status" value="1"/>
</dbReference>
<dbReference type="FunFam" id="3.40.50.2030:FF:000001">
    <property type="entry name" value="Hydroxylamine reductase"/>
    <property type="match status" value="1"/>
</dbReference>
<dbReference type="FunFam" id="3.40.50.2030:FF:000002">
    <property type="entry name" value="Hydroxylamine reductase"/>
    <property type="match status" value="1"/>
</dbReference>
<dbReference type="Gene3D" id="1.20.1270.20">
    <property type="match status" value="2"/>
</dbReference>
<dbReference type="Gene3D" id="3.40.50.2030">
    <property type="match status" value="2"/>
</dbReference>
<dbReference type="HAMAP" id="MF_00069">
    <property type="entry name" value="Hydroxylam_reduct"/>
    <property type="match status" value="1"/>
</dbReference>
<dbReference type="InterPro" id="IPR004137">
    <property type="entry name" value="HCP/CODH"/>
</dbReference>
<dbReference type="InterPro" id="IPR010048">
    <property type="entry name" value="Hydroxylam_reduct"/>
</dbReference>
<dbReference type="InterPro" id="IPR016099">
    <property type="entry name" value="Prismane-like_a/b-sand"/>
</dbReference>
<dbReference type="InterPro" id="IPR011254">
    <property type="entry name" value="Prismane-like_sf"/>
</dbReference>
<dbReference type="InterPro" id="IPR016100">
    <property type="entry name" value="Prismane_a-bundle"/>
</dbReference>
<dbReference type="NCBIfam" id="TIGR01703">
    <property type="entry name" value="hybrid_clust"/>
    <property type="match status" value="1"/>
</dbReference>
<dbReference type="NCBIfam" id="NF003658">
    <property type="entry name" value="PRK05290.1"/>
    <property type="match status" value="1"/>
</dbReference>
<dbReference type="PANTHER" id="PTHR30109">
    <property type="entry name" value="HYDROXYLAMINE REDUCTASE"/>
    <property type="match status" value="1"/>
</dbReference>
<dbReference type="PANTHER" id="PTHR30109:SF0">
    <property type="entry name" value="HYDROXYLAMINE REDUCTASE"/>
    <property type="match status" value="1"/>
</dbReference>
<dbReference type="Pfam" id="PF03063">
    <property type="entry name" value="Prismane"/>
    <property type="match status" value="1"/>
</dbReference>
<dbReference type="PIRSF" id="PIRSF000076">
    <property type="entry name" value="HCP"/>
    <property type="match status" value="1"/>
</dbReference>
<dbReference type="SUPFAM" id="SSF56821">
    <property type="entry name" value="Prismane protein-like"/>
    <property type="match status" value="1"/>
</dbReference>
<accession>A6VL83</accession>
<sequence length="553" mass="60704">MYCVQCEQTMITPKGNGCSFSQGMCGKTAETSDLQDLLIACLHSLSAWAVKAREYGIINHEADNFAPRAFFATLTNVNFDSARIAGYAQQALIYRNQLIKAVSAFESNPTLDHPLANIELNGVSVDKLARQAKQFALDTDRAKIGEEAHGVRLLCLYGLKGAAAYMEHAYVLDKFDNDIYAQYHGFMSWLGTHPSDLNELLEKALAIGSMNFNVMAMLDAGETEHFGNPVPAMVNVRPVKGKCILISGHDLKDLKELLEQTEGKGINVYTHGEMLPAHGYPELKKYKHLVGNFGSGWQNQQKEFARFPGAIVMTSNCLIDPNVGDYADRIFTRNIVGWPGVTHLEEHDFSPVIEKALECDGFPYTELEHLITVGFGRKTLIDASDAVIDLVKAGKLSHVFVIGGCDGDKEERHYYTDLAYALPKDTAVLTLGCGKYRFNKLDFGTIDGGLPRLLDAGQCNDTYSAIMLAVTLSQKLGIGLNELPLSIVLSWFEQKAIIVLLTLLALGVKNVYSGPSKPAFLNDNVMALLHEKFGLSGLTTPEQDFGHIIGKNA</sequence>
<keyword id="KW-0001">2Fe-2S</keyword>
<keyword id="KW-0963">Cytoplasm</keyword>
<keyword id="KW-0408">Iron</keyword>
<keyword id="KW-0411">Iron-sulfur</keyword>
<keyword id="KW-0479">Metal-binding</keyword>
<keyword id="KW-0560">Oxidoreductase</keyword>
<keyword id="KW-1185">Reference proteome</keyword>
<proteinExistence type="inferred from homology"/>
<organism>
    <name type="scientific">Actinobacillus succinogenes (strain ATCC 55618 / DSM 22257 / CCUG 43843 / 130Z)</name>
    <dbReference type="NCBI Taxonomy" id="339671"/>
    <lineage>
        <taxon>Bacteria</taxon>
        <taxon>Pseudomonadati</taxon>
        <taxon>Pseudomonadota</taxon>
        <taxon>Gammaproteobacteria</taxon>
        <taxon>Pasteurellales</taxon>
        <taxon>Pasteurellaceae</taxon>
        <taxon>Actinobacillus</taxon>
    </lineage>
</organism>
<feature type="chain" id="PRO_1000071172" description="Hydroxylamine reductase">
    <location>
        <begin position="1"/>
        <end position="553"/>
    </location>
</feature>
<feature type="binding site" evidence="1">
    <location>
        <position position="3"/>
    </location>
    <ligand>
        <name>[2Fe-2S] cluster</name>
        <dbReference type="ChEBI" id="CHEBI:190135"/>
    </ligand>
</feature>
<feature type="binding site" evidence="1">
    <location>
        <position position="6"/>
    </location>
    <ligand>
        <name>[2Fe-2S] cluster</name>
        <dbReference type="ChEBI" id="CHEBI:190135"/>
    </ligand>
</feature>
<feature type="binding site" evidence="1">
    <location>
        <position position="18"/>
    </location>
    <ligand>
        <name>[2Fe-2S] cluster</name>
        <dbReference type="ChEBI" id="CHEBI:190135"/>
    </ligand>
</feature>
<feature type="binding site" evidence="1">
    <location>
        <position position="25"/>
    </location>
    <ligand>
        <name>[2Fe-2S] cluster</name>
        <dbReference type="ChEBI" id="CHEBI:190135"/>
    </ligand>
</feature>
<feature type="binding site" evidence="1">
    <location>
        <position position="249"/>
    </location>
    <ligand>
        <name>hybrid [4Fe-2O-2S] cluster</name>
        <dbReference type="ChEBI" id="CHEBI:60519"/>
    </ligand>
</feature>
<feature type="binding site" evidence="1">
    <location>
        <position position="273"/>
    </location>
    <ligand>
        <name>hybrid [4Fe-2O-2S] cluster</name>
        <dbReference type="ChEBI" id="CHEBI:60519"/>
    </ligand>
</feature>
<feature type="binding site" evidence="1">
    <location>
        <position position="317"/>
    </location>
    <ligand>
        <name>hybrid [4Fe-2O-2S] cluster</name>
        <dbReference type="ChEBI" id="CHEBI:60519"/>
    </ligand>
</feature>
<feature type="binding site" description="via persulfide group" evidence="1">
    <location>
        <position position="405"/>
    </location>
    <ligand>
        <name>hybrid [4Fe-2O-2S] cluster</name>
        <dbReference type="ChEBI" id="CHEBI:60519"/>
    </ligand>
</feature>
<feature type="binding site" evidence="1">
    <location>
        <position position="433"/>
    </location>
    <ligand>
        <name>hybrid [4Fe-2O-2S] cluster</name>
        <dbReference type="ChEBI" id="CHEBI:60519"/>
    </ligand>
</feature>
<feature type="binding site" evidence="1">
    <location>
        <position position="459"/>
    </location>
    <ligand>
        <name>hybrid [4Fe-2O-2S] cluster</name>
        <dbReference type="ChEBI" id="CHEBI:60519"/>
    </ligand>
</feature>
<feature type="binding site" evidence="1">
    <location>
        <position position="493"/>
    </location>
    <ligand>
        <name>hybrid [4Fe-2O-2S] cluster</name>
        <dbReference type="ChEBI" id="CHEBI:60519"/>
    </ligand>
</feature>
<feature type="binding site" evidence="1">
    <location>
        <position position="495"/>
    </location>
    <ligand>
        <name>hybrid [4Fe-2O-2S] cluster</name>
        <dbReference type="ChEBI" id="CHEBI:60519"/>
    </ligand>
</feature>
<feature type="modified residue" description="Cysteine persulfide" evidence="1">
    <location>
        <position position="405"/>
    </location>
</feature>